<organism>
    <name type="scientific">Homo sapiens</name>
    <name type="common">Human</name>
    <dbReference type="NCBI Taxonomy" id="9606"/>
    <lineage>
        <taxon>Eukaryota</taxon>
        <taxon>Metazoa</taxon>
        <taxon>Chordata</taxon>
        <taxon>Craniata</taxon>
        <taxon>Vertebrata</taxon>
        <taxon>Euteleostomi</taxon>
        <taxon>Mammalia</taxon>
        <taxon>Eutheria</taxon>
        <taxon>Euarchontoglires</taxon>
        <taxon>Primates</taxon>
        <taxon>Haplorrhini</taxon>
        <taxon>Catarrhini</taxon>
        <taxon>Hominidae</taxon>
        <taxon>Homo</taxon>
    </lineage>
</organism>
<comment type="function">
    <text evidence="3">Odorant receptor.</text>
</comment>
<comment type="subcellular location">
    <subcellularLocation>
        <location>Cell membrane</location>
        <topology>Multi-pass membrane protein</topology>
    </subcellularLocation>
</comment>
<comment type="similarity">
    <text evidence="2">Belongs to the G-protein coupled receptor 1 family.</text>
</comment>
<comment type="online information" name="Human Olfactory Receptor Data Exploratorium (HORDE)">
    <link uri="http://genome.weizmann.ac.il/horde/card/index/symbol:OR13J1"/>
</comment>
<name>O13J1_HUMAN</name>
<sequence length="312" mass="34689">MEPLNRTEVSEFFLKGFSGYPALEHLLFPLCSAMYLVTLLGNTAIMAVSVLDIHLHTPVYFFLGNLSTLDICYTPTFVPLMLVHLLSSRKTISFAVCAIQMCLSLSTGSTECLLLAITAYDRYLAICQPLRYHVLMSHRLCVLLMGAAWVLCLLKSVTEMVISMRLPFCGHHVVSHFTCKILAVLKLACGNTSVSEDFLLAGSILLLPVPLAFICLSYLLILATILRVPSAARCCKAFSTCLAHLAVVLLFYGTIIFMYLKPKSKEAHISDEVFTVLYAMVTTMLNPTIYSLRNKEVKEAARKVWGRSRASR</sequence>
<dbReference type="EMBL" id="AB065705">
    <property type="protein sequence ID" value="BAC05928.1"/>
    <property type="molecule type" value="Genomic_DNA"/>
</dbReference>
<dbReference type="EMBL" id="AL133410">
    <property type="status" value="NOT_ANNOTATED_CDS"/>
    <property type="molecule type" value="Genomic_DNA"/>
</dbReference>
<dbReference type="EMBL" id="CH471071">
    <property type="protein sequence ID" value="EAW58323.1"/>
    <property type="molecule type" value="Genomic_DNA"/>
</dbReference>
<dbReference type="EMBL" id="BC136715">
    <property type="protein sequence ID" value="AAI36716.1"/>
    <property type="molecule type" value="mRNA"/>
</dbReference>
<dbReference type="EMBL" id="BC136716">
    <property type="protein sequence ID" value="AAI36717.1"/>
    <property type="molecule type" value="mRNA"/>
</dbReference>
<dbReference type="EMBL" id="AF399603">
    <property type="protein sequence ID" value="AAK95088.1"/>
    <property type="molecule type" value="Genomic_DNA"/>
</dbReference>
<dbReference type="EMBL" id="BK004442">
    <property type="protein sequence ID" value="DAA04840.1"/>
    <property type="molecule type" value="Genomic_DNA"/>
</dbReference>
<dbReference type="CCDS" id="CCDS35011.1"/>
<dbReference type="RefSeq" id="NP_001004487.1">
    <property type="nucleotide sequence ID" value="NM_001004487.1"/>
</dbReference>
<dbReference type="SMR" id="Q8NGT2"/>
<dbReference type="BioGRID" id="134172">
    <property type="interactions" value="10"/>
</dbReference>
<dbReference type="FunCoup" id="Q8NGT2">
    <property type="interactions" value="706"/>
</dbReference>
<dbReference type="IntAct" id="Q8NGT2">
    <property type="interactions" value="8"/>
</dbReference>
<dbReference type="STRING" id="9606.ENSP00000367219"/>
<dbReference type="GlyCosmos" id="Q8NGT2">
    <property type="glycosylation" value="2 sites, No reported glycans"/>
</dbReference>
<dbReference type="GlyGen" id="Q8NGT2">
    <property type="glycosylation" value="2 sites"/>
</dbReference>
<dbReference type="PhosphoSitePlus" id="Q8NGT2"/>
<dbReference type="BioMuta" id="OR13J1"/>
<dbReference type="DMDM" id="38372769"/>
<dbReference type="MassIVE" id="Q8NGT2"/>
<dbReference type="PaxDb" id="9606-ENSP00000367219"/>
<dbReference type="PeptideAtlas" id="Q8NGT2"/>
<dbReference type="Antibodypedia" id="54541">
    <property type="antibodies" value="69 antibodies from 13 providers"/>
</dbReference>
<dbReference type="DNASU" id="392309"/>
<dbReference type="Ensembl" id="ENST00000377981.4">
    <property type="protein sequence ID" value="ENSP00000367219.2"/>
    <property type="gene ID" value="ENSG00000168828.6"/>
</dbReference>
<dbReference type="GeneID" id="392309"/>
<dbReference type="KEGG" id="hsa:392309"/>
<dbReference type="MANE-Select" id="ENST00000377981.4">
    <property type="protein sequence ID" value="ENSP00000367219.2"/>
    <property type="RefSeq nucleotide sequence ID" value="NM_001004487.1"/>
    <property type="RefSeq protein sequence ID" value="NP_001004487.1"/>
</dbReference>
<dbReference type="UCSC" id="uc011lph.3">
    <property type="organism name" value="human"/>
</dbReference>
<dbReference type="AGR" id="HGNC:15108"/>
<dbReference type="CTD" id="392309"/>
<dbReference type="GeneCards" id="OR13J1"/>
<dbReference type="HGNC" id="HGNC:15108">
    <property type="gene designation" value="OR13J1"/>
</dbReference>
<dbReference type="HPA" id="ENSG00000168828">
    <property type="expression patterns" value="Tissue enhanced (retina)"/>
</dbReference>
<dbReference type="neXtProt" id="NX_Q8NGT2"/>
<dbReference type="PharmGKB" id="PA32049"/>
<dbReference type="VEuPathDB" id="HostDB:ENSG00000168828"/>
<dbReference type="eggNOG" id="ENOG502RNT5">
    <property type="taxonomic scope" value="Eukaryota"/>
</dbReference>
<dbReference type="GeneTree" id="ENSGT01040000240406"/>
<dbReference type="HOGENOM" id="CLU_012526_1_0_1"/>
<dbReference type="InParanoid" id="Q8NGT2"/>
<dbReference type="OMA" id="VSHFTCK"/>
<dbReference type="OrthoDB" id="6144223at2759"/>
<dbReference type="PAN-GO" id="Q8NGT2">
    <property type="GO annotations" value="0 GO annotations based on evolutionary models"/>
</dbReference>
<dbReference type="PhylomeDB" id="Q8NGT2"/>
<dbReference type="TreeFam" id="TF352686"/>
<dbReference type="PathwayCommons" id="Q8NGT2"/>
<dbReference type="Reactome" id="R-HSA-9752946">
    <property type="pathway name" value="Expression and translocation of olfactory receptors"/>
</dbReference>
<dbReference type="BioGRID-ORCS" id="392309">
    <property type="hits" value="19 hits in 751 CRISPR screens"/>
</dbReference>
<dbReference type="GeneWiki" id="OR13J1"/>
<dbReference type="GenomeRNAi" id="392309"/>
<dbReference type="Pharos" id="Q8NGT2">
    <property type="development level" value="Tdark"/>
</dbReference>
<dbReference type="PRO" id="PR:Q8NGT2"/>
<dbReference type="Proteomes" id="UP000005640">
    <property type="component" value="Chromosome 9"/>
</dbReference>
<dbReference type="RNAct" id="Q8NGT2">
    <property type="molecule type" value="protein"/>
</dbReference>
<dbReference type="Bgee" id="ENSG00000168828">
    <property type="expression patterns" value="Expressed in prefrontal cortex and 41 other cell types or tissues"/>
</dbReference>
<dbReference type="GO" id="GO:0005886">
    <property type="term" value="C:plasma membrane"/>
    <property type="evidence" value="ECO:0000318"/>
    <property type="project" value="GO_Central"/>
</dbReference>
<dbReference type="GO" id="GO:0004930">
    <property type="term" value="F:G protein-coupled receptor activity"/>
    <property type="evidence" value="ECO:0007669"/>
    <property type="project" value="UniProtKB-KW"/>
</dbReference>
<dbReference type="GO" id="GO:0004984">
    <property type="term" value="F:olfactory receptor activity"/>
    <property type="evidence" value="ECO:0000318"/>
    <property type="project" value="GO_Central"/>
</dbReference>
<dbReference type="GO" id="GO:0050911">
    <property type="term" value="P:detection of chemical stimulus involved in sensory perception of smell"/>
    <property type="evidence" value="ECO:0000318"/>
    <property type="project" value="GO_Central"/>
</dbReference>
<dbReference type="CDD" id="cd15430">
    <property type="entry name" value="7tmA_OR13-like"/>
    <property type="match status" value="1"/>
</dbReference>
<dbReference type="FunFam" id="1.10.1220.70:FF:000001">
    <property type="entry name" value="Olfactory receptor"/>
    <property type="match status" value="1"/>
</dbReference>
<dbReference type="FunFam" id="1.20.1070.10:FF:000005">
    <property type="entry name" value="Olfactory receptor"/>
    <property type="match status" value="1"/>
</dbReference>
<dbReference type="Gene3D" id="1.20.1070.10">
    <property type="entry name" value="Rhodopsin 7-helix transmembrane proteins"/>
    <property type="match status" value="1"/>
</dbReference>
<dbReference type="InterPro" id="IPR000276">
    <property type="entry name" value="GPCR_Rhodpsn"/>
</dbReference>
<dbReference type="InterPro" id="IPR017452">
    <property type="entry name" value="GPCR_Rhodpsn_7TM"/>
</dbReference>
<dbReference type="InterPro" id="IPR000725">
    <property type="entry name" value="Olfact_rcpt"/>
</dbReference>
<dbReference type="PANTHER" id="PTHR26453">
    <property type="entry name" value="OLFACTORY RECEPTOR"/>
    <property type="match status" value="1"/>
</dbReference>
<dbReference type="Pfam" id="PF13853">
    <property type="entry name" value="7tm_4"/>
    <property type="match status" value="1"/>
</dbReference>
<dbReference type="PRINTS" id="PR00237">
    <property type="entry name" value="GPCRRHODOPSN"/>
</dbReference>
<dbReference type="PRINTS" id="PR00245">
    <property type="entry name" value="OLFACTORYR"/>
</dbReference>
<dbReference type="SUPFAM" id="SSF81321">
    <property type="entry name" value="Family A G protein-coupled receptor-like"/>
    <property type="match status" value="1"/>
</dbReference>
<dbReference type="PROSITE" id="PS00237">
    <property type="entry name" value="G_PROTEIN_RECEP_F1_1"/>
    <property type="match status" value="1"/>
</dbReference>
<dbReference type="PROSITE" id="PS50262">
    <property type="entry name" value="G_PROTEIN_RECEP_F1_2"/>
    <property type="match status" value="1"/>
</dbReference>
<proteinExistence type="evidence at transcript level"/>
<feature type="chain" id="PRO_0000150741" description="Olfactory receptor 13J1">
    <location>
        <begin position="1"/>
        <end position="312"/>
    </location>
</feature>
<feature type="topological domain" description="Extracellular" evidence="1">
    <location>
        <begin position="1"/>
        <end position="25"/>
    </location>
</feature>
<feature type="transmembrane region" description="Helical; Name=1" evidence="1">
    <location>
        <begin position="26"/>
        <end position="46"/>
    </location>
</feature>
<feature type="topological domain" description="Cytoplasmic" evidence="1">
    <location>
        <begin position="47"/>
        <end position="54"/>
    </location>
</feature>
<feature type="transmembrane region" description="Helical; Name=2" evidence="1">
    <location>
        <begin position="55"/>
        <end position="75"/>
    </location>
</feature>
<feature type="topological domain" description="Extracellular" evidence="1">
    <location>
        <begin position="76"/>
        <end position="99"/>
    </location>
</feature>
<feature type="transmembrane region" description="Helical; Name=3" evidence="1">
    <location>
        <begin position="100"/>
        <end position="120"/>
    </location>
</feature>
<feature type="topological domain" description="Cytoplasmic" evidence="1">
    <location>
        <begin position="121"/>
        <end position="139"/>
    </location>
</feature>
<feature type="transmembrane region" description="Helical; Name=4" evidence="1">
    <location>
        <begin position="140"/>
        <end position="160"/>
    </location>
</feature>
<feature type="topological domain" description="Extracellular" evidence="1">
    <location>
        <begin position="161"/>
        <end position="197"/>
    </location>
</feature>
<feature type="transmembrane region" description="Helical; Name=5" evidence="1">
    <location>
        <begin position="198"/>
        <end position="217"/>
    </location>
</feature>
<feature type="topological domain" description="Cytoplasmic" evidence="1">
    <location>
        <begin position="218"/>
        <end position="237"/>
    </location>
</feature>
<feature type="transmembrane region" description="Helical; Name=6" evidence="1">
    <location>
        <begin position="238"/>
        <end position="258"/>
    </location>
</feature>
<feature type="topological domain" description="Extracellular" evidence="1">
    <location>
        <begin position="259"/>
        <end position="271"/>
    </location>
</feature>
<feature type="transmembrane region" description="Helical; Name=7" evidence="1">
    <location>
        <begin position="272"/>
        <end position="292"/>
    </location>
</feature>
<feature type="topological domain" description="Cytoplasmic" evidence="1">
    <location>
        <begin position="293"/>
        <end position="312"/>
    </location>
</feature>
<feature type="glycosylation site" description="N-linked (GlcNAc...) asparagine" evidence="1">
    <location>
        <position position="5"/>
    </location>
</feature>
<feature type="glycosylation site" description="N-linked (GlcNAc...) asparagine" evidence="1">
    <location>
        <position position="191"/>
    </location>
</feature>
<feature type="disulfide bond" evidence="2">
    <location>
        <begin position="97"/>
        <end position="189"/>
    </location>
</feature>
<feature type="sequence variant" id="VAR_053304" description="In dbSNP:rs7044405.">
    <original>H</original>
    <variation>R</variation>
    <location>
        <position position="133"/>
    </location>
</feature>
<protein>
    <recommendedName>
        <fullName>Olfactory receptor 13J1</fullName>
    </recommendedName>
    <alternativeName>
        <fullName>Olfactory receptor OR9-2</fullName>
    </alternativeName>
</protein>
<evidence type="ECO:0000255" key="1"/>
<evidence type="ECO:0000255" key="2">
    <source>
        <dbReference type="PROSITE-ProRule" id="PRU00521"/>
    </source>
</evidence>
<evidence type="ECO:0000305" key="3"/>
<keyword id="KW-1003">Cell membrane</keyword>
<keyword id="KW-1015">Disulfide bond</keyword>
<keyword id="KW-0297">G-protein coupled receptor</keyword>
<keyword id="KW-0325">Glycoprotein</keyword>
<keyword id="KW-0472">Membrane</keyword>
<keyword id="KW-0552">Olfaction</keyword>
<keyword id="KW-0675">Receptor</keyword>
<keyword id="KW-1185">Reference proteome</keyword>
<keyword id="KW-0716">Sensory transduction</keyword>
<keyword id="KW-0807">Transducer</keyword>
<keyword id="KW-0812">Transmembrane</keyword>
<keyword id="KW-1133">Transmembrane helix</keyword>
<reference key="1">
    <citation type="submission" date="2001-07" db="EMBL/GenBank/DDBJ databases">
        <title>Genome-wide discovery and analysis of human seven transmembrane helix receptor genes.</title>
        <authorList>
            <person name="Suwa M."/>
            <person name="Sato T."/>
            <person name="Okouchi I."/>
            <person name="Arita M."/>
            <person name="Futami K."/>
            <person name="Matsumoto S."/>
            <person name="Tsutsumi S."/>
            <person name="Aburatani H."/>
            <person name="Asai K."/>
            <person name="Akiyama Y."/>
        </authorList>
    </citation>
    <scope>NUCLEOTIDE SEQUENCE [GENOMIC DNA]</scope>
</reference>
<reference key="2">
    <citation type="journal article" date="2004" name="Nature">
        <title>DNA sequence and analysis of human chromosome 9.</title>
        <authorList>
            <person name="Humphray S.J."/>
            <person name="Oliver K."/>
            <person name="Hunt A.R."/>
            <person name="Plumb R.W."/>
            <person name="Loveland J.E."/>
            <person name="Howe K.L."/>
            <person name="Andrews T.D."/>
            <person name="Searle S."/>
            <person name="Hunt S.E."/>
            <person name="Scott C.E."/>
            <person name="Jones M.C."/>
            <person name="Ainscough R."/>
            <person name="Almeida J.P."/>
            <person name="Ambrose K.D."/>
            <person name="Ashwell R.I.S."/>
            <person name="Babbage A.K."/>
            <person name="Babbage S."/>
            <person name="Bagguley C.L."/>
            <person name="Bailey J."/>
            <person name="Banerjee R."/>
            <person name="Barker D.J."/>
            <person name="Barlow K.F."/>
            <person name="Bates K."/>
            <person name="Beasley H."/>
            <person name="Beasley O."/>
            <person name="Bird C.P."/>
            <person name="Bray-Allen S."/>
            <person name="Brown A.J."/>
            <person name="Brown J.Y."/>
            <person name="Burford D."/>
            <person name="Burrill W."/>
            <person name="Burton J."/>
            <person name="Carder C."/>
            <person name="Carter N.P."/>
            <person name="Chapman J.C."/>
            <person name="Chen Y."/>
            <person name="Clarke G."/>
            <person name="Clark S.Y."/>
            <person name="Clee C.M."/>
            <person name="Clegg S."/>
            <person name="Collier R.E."/>
            <person name="Corby N."/>
            <person name="Crosier M."/>
            <person name="Cummings A.T."/>
            <person name="Davies J."/>
            <person name="Dhami P."/>
            <person name="Dunn M."/>
            <person name="Dutta I."/>
            <person name="Dyer L.W."/>
            <person name="Earthrowl M.E."/>
            <person name="Faulkner L."/>
            <person name="Fleming C.J."/>
            <person name="Frankish A."/>
            <person name="Frankland J.A."/>
            <person name="French L."/>
            <person name="Fricker D.G."/>
            <person name="Garner P."/>
            <person name="Garnett J."/>
            <person name="Ghori J."/>
            <person name="Gilbert J.G.R."/>
            <person name="Glison C."/>
            <person name="Grafham D.V."/>
            <person name="Gribble S."/>
            <person name="Griffiths C."/>
            <person name="Griffiths-Jones S."/>
            <person name="Grocock R."/>
            <person name="Guy J."/>
            <person name="Hall R.E."/>
            <person name="Hammond S."/>
            <person name="Harley J.L."/>
            <person name="Harrison E.S.I."/>
            <person name="Hart E.A."/>
            <person name="Heath P.D."/>
            <person name="Henderson C.D."/>
            <person name="Hopkins B.L."/>
            <person name="Howard P.J."/>
            <person name="Howden P.J."/>
            <person name="Huckle E."/>
            <person name="Johnson C."/>
            <person name="Johnson D."/>
            <person name="Joy A.A."/>
            <person name="Kay M."/>
            <person name="Keenan S."/>
            <person name="Kershaw J.K."/>
            <person name="Kimberley A.M."/>
            <person name="King A."/>
            <person name="Knights A."/>
            <person name="Laird G.K."/>
            <person name="Langford C."/>
            <person name="Lawlor S."/>
            <person name="Leongamornlert D.A."/>
            <person name="Leversha M."/>
            <person name="Lloyd C."/>
            <person name="Lloyd D.M."/>
            <person name="Lovell J."/>
            <person name="Martin S."/>
            <person name="Mashreghi-Mohammadi M."/>
            <person name="Matthews L."/>
            <person name="McLaren S."/>
            <person name="McLay K.E."/>
            <person name="McMurray A."/>
            <person name="Milne S."/>
            <person name="Nickerson T."/>
            <person name="Nisbett J."/>
            <person name="Nordsiek G."/>
            <person name="Pearce A.V."/>
            <person name="Peck A.I."/>
            <person name="Porter K.M."/>
            <person name="Pandian R."/>
            <person name="Pelan S."/>
            <person name="Phillimore B."/>
            <person name="Povey S."/>
            <person name="Ramsey Y."/>
            <person name="Rand V."/>
            <person name="Scharfe M."/>
            <person name="Sehra H.K."/>
            <person name="Shownkeen R."/>
            <person name="Sims S.K."/>
            <person name="Skuce C.D."/>
            <person name="Smith M."/>
            <person name="Steward C.A."/>
            <person name="Swarbreck D."/>
            <person name="Sycamore N."/>
            <person name="Tester J."/>
            <person name="Thorpe A."/>
            <person name="Tracey A."/>
            <person name="Tromans A."/>
            <person name="Thomas D.W."/>
            <person name="Wall M."/>
            <person name="Wallis J.M."/>
            <person name="West A.P."/>
            <person name="Whitehead S.L."/>
            <person name="Willey D.L."/>
            <person name="Williams S.A."/>
            <person name="Wilming L."/>
            <person name="Wray P.W."/>
            <person name="Young L."/>
            <person name="Ashurst J.L."/>
            <person name="Coulson A."/>
            <person name="Blocker H."/>
            <person name="Durbin R.M."/>
            <person name="Sulston J.E."/>
            <person name="Hubbard T."/>
            <person name="Jackson M.J."/>
            <person name="Bentley D.R."/>
            <person name="Beck S."/>
            <person name="Rogers J."/>
            <person name="Dunham I."/>
        </authorList>
    </citation>
    <scope>NUCLEOTIDE SEQUENCE [LARGE SCALE GENOMIC DNA]</scope>
</reference>
<reference key="3">
    <citation type="submission" date="2005-09" db="EMBL/GenBank/DDBJ databases">
        <authorList>
            <person name="Mural R.J."/>
            <person name="Istrail S."/>
            <person name="Sutton G.G."/>
            <person name="Florea L."/>
            <person name="Halpern A.L."/>
            <person name="Mobarry C.M."/>
            <person name="Lippert R."/>
            <person name="Walenz B."/>
            <person name="Shatkay H."/>
            <person name="Dew I."/>
            <person name="Miller J.R."/>
            <person name="Flanigan M.J."/>
            <person name="Edwards N.J."/>
            <person name="Bolanos R."/>
            <person name="Fasulo D."/>
            <person name="Halldorsson B.V."/>
            <person name="Hannenhalli S."/>
            <person name="Turner R."/>
            <person name="Yooseph S."/>
            <person name="Lu F."/>
            <person name="Nusskern D.R."/>
            <person name="Shue B.C."/>
            <person name="Zheng X.H."/>
            <person name="Zhong F."/>
            <person name="Delcher A.L."/>
            <person name="Huson D.H."/>
            <person name="Kravitz S.A."/>
            <person name="Mouchard L."/>
            <person name="Reinert K."/>
            <person name="Remington K.A."/>
            <person name="Clark A.G."/>
            <person name="Waterman M.S."/>
            <person name="Eichler E.E."/>
            <person name="Adams M.D."/>
            <person name="Hunkapiller M.W."/>
            <person name="Myers E.W."/>
            <person name="Venter J.C."/>
        </authorList>
    </citation>
    <scope>NUCLEOTIDE SEQUENCE [LARGE SCALE GENOMIC DNA]</scope>
</reference>
<reference key="4">
    <citation type="journal article" date="2004" name="Genome Res.">
        <title>The status, quality, and expansion of the NIH full-length cDNA project: the Mammalian Gene Collection (MGC).</title>
        <authorList>
            <consortium name="The MGC Project Team"/>
        </authorList>
    </citation>
    <scope>NUCLEOTIDE SEQUENCE [LARGE SCALE MRNA]</scope>
    <source>
        <tissue>Brain</tissue>
    </source>
</reference>
<reference key="5">
    <citation type="journal article" date="2002" name="Genomics">
        <title>DEFOG: a practical scheme for deciphering families of genes.</title>
        <authorList>
            <person name="Fuchs T."/>
            <person name="Malecova B."/>
            <person name="Linhart C."/>
            <person name="Sharan R."/>
            <person name="Khen M."/>
            <person name="Herwig R."/>
            <person name="Shmulevich D."/>
            <person name="Elkon R."/>
            <person name="Steinfath M."/>
            <person name="O'Brien J.K."/>
            <person name="Radelof U."/>
            <person name="Lehrach H."/>
            <person name="Lancet D."/>
            <person name="Shamir R."/>
        </authorList>
    </citation>
    <scope>NUCLEOTIDE SEQUENCE [GENOMIC DNA] OF 68-283</scope>
</reference>
<reference key="6">
    <citation type="journal article" date="2004" name="Proc. Natl. Acad. Sci. U.S.A.">
        <title>The human olfactory receptor gene family.</title>
        <authorList>
            <person name="Malnic B."/>
            <person name="Godfrey P.A."/>
            <person name="Buck L.B."/>
        </authorList>
    </citation>
    <scope>IDENTIFICATION</scope>
</reference>
<reference key="7">
    <citation type="journal article" date="2004" name="Proc. Natl. Acad. Sci. U.S.A.">
        <authorList>
            <person name="Malnic B."/>
            <person name="Godfrey P.A."/>
            <person name="Buck L.B."/>
        </authorList>
    </citation>
    <scope>ERRATUM OF PUBMED:14983052</scope>
</reference>
<gene>
    <name type="primary">OR13J1</name>
</gene>
<accession>Q8NGT2</accession>
<accession>B2RN66</accession>
<accession>Q6IF20</accession>
<accession>Q96R40</accession>